<sequence>MDLTAENLGVRRGEDFIFMNISFKLSDGEALVLTGRNGSGKSTLLRTVAGLLRPEQGRVKIAGEGIDAEMRPSEAFHYLGHRNAMKTELTVAENLRFWKDFLGDFPGSTGVAIDEAAAIVGLAGITHLPFGYLSAGQQRRFAMAKLLVAWRPVWILDEPTAALDRAADAMFTDLVKSHLGKGGIVLAATHQPLGLEKAQELQMTGFAGVETWA</sequence>
<accession>Q8UC12</accession>
<evidence type="ECO:0000255" key="1">
    <source>
        <dbReference type="HAMAP-Rule" id="MF_01707"/>
    </source>
</evidence>
<organism>
    <name type="scientific">Agrobacterium fabrum (strain C58 / ATCC 33970)</name>
    <name type="common">Agrobacterium tumefaciens (strain C58)</name>
    <dbReference type="NCBI Taxonomy" id="176299"/>
    <lineage>
        <taxon>Bacteria</taxon>
        <taxon>Pseudomonadati</taxon>
        <taxon>Pseudomonadota</taxon>
        <taxon>Alphaproteobacteria</taxon>
        <taxon>Hyphomicrobiales</taxon>
        <taxon>Rhizobiaceae</taxon>
        <taxon>Rhizobium/Agrobacterium group</taxon>
        <taxon>Agrobacterium</taxon>
        <taxon>Agrobacterium tumefaciens complex</taxon>
    </lineage>
</organism>
<reference key="1">
    <citation type="journal article" date="2001" name="Science">
        <title>The genome of the natural genetic engineer Agrobacterium tumefaciens C58.</title>
        <authorList>
            <person name="Wood D.W."/>
            <person name="Setubal J.C."/>
            <person name="Kaul R."/>
            <person name="Monks D.E."/>
            <person name="Kitajima J.P."/>
            <person name="Okura V.K."/>
            <person name="Zhou Y."/>
            <person name="Chen L."/>
            <person name="Wood G.E."/>
            <person name="Almeida N.F. Jr."/>
            <person name="Woo L."/>
            <person name="Chen Y."/>
            <person name="Paulsen I.T."/>
            <person name="Eisen J.A."/>
            <person name="Karp P.D."/>
            <person name="Bovee D. Sr."/>
            <person name="Chapman P."/>
            <person name="Clendenning J."/>
            <person name="Deatherage G."/>
            <person name="Gillet W."/>
            <person name="Grant C."/>
            <person name="Kutyavin T."/>
            <person name="Levy R."/>
            <person name="Li M.-J."/>
            <person name="McClelland E."/>
            <person name="Palmieri A."/>
            <person name="Raymond C."/>
            <person name="Rouse G."/>
            <person name="Saenphimmachak C."/>
            <person name="Wu Z."/>
            <person name="Romero P."/>
            <person name="Gordon D."/>
            <person name="Zhang S."/>
            <person name="Yoo H."/>
            <person name="Tao Y."/>
            <person name="Biddle P."/>
            <person name="Jung M."/>
            <person name="Krespan W."/>
            <person name="Perry M."/>
            <person name="Gordon-Kamm B."/>
            <person name="Liao L."/>
            <person name="Kim S."/>
            <person name="Hendrick C."/>
            <person name="Zhao Z.-Y."/>
            <person name="Dolan M."/>
            <person name="Chumley F."/>
            <person name="Tingey S.V."/>
            <person name="Tomb J.-F."/>
            <person name="Gordon M.P."/>
            <person name="Olson M.V."/>
            <person name="Nester E.W."/>
        </authorList>
    </citation>
    <scope>NUCLEOTIDE SEQUENCE [LARGE SCALE GENOMIC DNA]</scope>
    <source>
        <strain>C58 / ATCC 33970</strain>
    </source>
</reference>
<reference key="2">
    <citation type="journal article" date="2001" name="Science">
        <title>Genome sequence of the plant pathogen and biotechnology agent Agrobacterium tumefaciens C58.</title>
        <authorList>
            <person name="Goodner B."/>
            <person name="Hinkle G."/>
            <person name="Gattung S."/>
            <person name="Miller N."/>
            <person name="Blanchard M."/>
            <person name="Qurollo B."/>
            <person name="Goldman B.S."/>
            <person name="Cao Y."/>
            <person name="Askenazi M."/>
            <person name="Halling C."/>
            <person name="Mullin L."/>
            <person name="Houmiel K."/>
            <person name="Gordon J."/>
            <person name="Vaudin M."/>
            <person name="Iartchouk O."/>
            <person name="Epp A."/>
            <person name="Liu F."/>
            <person name="Wollam C."/>
            <person name="Allinger M."/>
            <person name="Doughty D."/>
            <person name="Scott C."/>
            <person name="Lappas C."/>
            <person name="Markelz B."/>
            <person name="Flanagan C."/>
            <person name="Crowell C."/>
            <person name="Gurson J."/>
            <person name="Lomo C."/>
            <person name="Sear C."/>
            <person name="Strub G."/>
            <person name="Cielo C."/>
            <person name="Slater S."/>
        </authorList>
    </citation>
    <scope>NUCLEOTIDE SEQUENCE [LARGE SCALE GENOMIC DNA]</scope>
    <source>
        <strain>C58 / ATCC 33970</strain>
    </source>
</reference>
<feature type="chain" id="PRO_0000092165" description="Cytochrome c biogenesis ATP-binding export protein CcmA">
    <location>
        <begin position="1"/>
        <end position="213"/>
    </location>
</feature>
<feature type="domain" description="ABC transporter" evidence="1">
    <location>
        <begin position="3"/>
        <end position="211"/>
    </location>
</feature>
<feature type="binding site" evidence="1">
    <location>
        <begin position="35"/>
        <end position="42"/>
    </location>
    <ligand>
        <name>ATP</name>
        <dbReference type="ChEBI" id="CHEBI:30616"/>
    </ligand>
</feature>
<gene>
    <name evidence="1" type="primary">ccmA</name>
    <name type="ordered locus">Atu2686</name>
    <name type="ORF">AGR_C_4868</name>
</gene>
<dbReference type="EC" id="7.6.2.5" evidence="1"/>
<dbReference type="EMBL" id="AE007869">
    <property type="protein sequence ID" value="AAK88407.1"/>
    <property type="molecule type" value="Genomic_DNA"/>
</dbReference>
<dbReference type="PIR" id="AE2906">
    <property type="entry name" value="AE2906"/>
</dbReference>
<dbReference type="PIR" id="F97681">
    <property type="entry name" value="F97681"/>
</dbReference>
<dbReference type="RefSeq" id="NP_355622.1">
    <property type="nucleotide sequence ID" value="NC_003062.2"/>
</dbReference>
<dbReference type="RefSeq" id="WP_010972489.1">
    <property type="nucleotide sequence ID" value="NC_003062.2"/>
</dbReference>
<dbReference type="SMR" id="Q8UC12"/>
<dbReference type="STRING" id="176299.Atu2686"/>
<dbReference type="EnsemblBacteria" id="AAK88407">
    <property type="protein sequence ID" value="AAK88407"/>
    <property type="gene ID" value="Atu2686"/>
</dbReference>
<dbReference type="GeneID" id="1134724"/>
<dbReference type="KEGG" id="atu:Atu2686"/>
<dbReference type="PATRIC" id="fig|176299.10.peg.2695"/>
<dbReference type="eggNOG" id="COG4133">
    <property type="taxonomic scope" value="Bacteria"/>
</dbReference>
<dbReference type="HOGENOM" id="CLU_000604_1_2_5"/>
<dbReference type="OrthoDB" id="9800654at2"/>
<dbReference type="PhylomeDB" id="Q8UC12"/>
<dbReference type="BioCyc" id="AGRO:ATU2686-MONOMER"/>
<dbReference type="Proteomes" id="UP000000813">
    <property type="component" value="Chromosome circular"/>
</dbReference>
<dbReference type="GO" id="GO:0005886">
    <property type="term" value="C:plasma membrane"/>
    <property type="evidence" value="ECO:0007669"/>
    <property type="project" value="UniProtKB-SubCell"/>
</dbReference>
<dbReference type="GO" id="GO:0015439">
    <property type="term" value="F:ABC-type heme transporter activity"/>
    <property type="evidence" value="ECO:0007669"/>
    <property type="project" value="UniProtKB-EC"/>
</dbReference>
<dbReference type="GO" id="GO:0005524">
    <property type="term" value="F:ATP binding"/>
    <property type="evidence" value="ECO:0007669"/>
    <property type="project" value="UniProtKB-KW"/>
</dbReference>
<dbReference type="GO" id="GO:0016887">
    <property type="term" value="F:ATP hydrolysis activity"/>
    <property type="evidence" value="ECO:0007669"/>
    <property type="project" value="InterPro"/>
</dbReference>
<dbReference type="GO" id="GO:0017004">
    <property type="term" value="P:cytochrome complex assembly"/>
    <property type="evidence" value="ECO:0007669"/>
    <property type="project" value="UniProtKB-KW"/>
</dbReference>
<dbReference type="Gene3D" id="3.40.50.300">
    <property type="entry name" value="P-loop containing nucleotide triphosphate hydrolases"/>
    <property type="match status" value="1"/>
</dbReference>
<dbReference type="InterPro" id="IPR003593">
    <property type="entry name" value="AAA+_ATPase"/>
</dbReference>
<dbReference type="InterPro" id="IPR003439">
    <property type="entry name" value="ABC_transporter-like_ATP-bd"/>
</dbReference>
<dbReference type="InterPro" id="IPR017871">
    <property type="entry name" value="ABC_transporter-like_CS"/>
</dbReference>
<dbReference type="InterPro" id="IPR005895">
    <property type="entry name" value="ABC_transptr_haem_export_CcmA"/>
</dbReference>
<dbReference type="InterPro" id="IPR027417">
    <property type="entry name" value="P-loop_NTPase"/>
</dbReference>
<dbReference type="NCBIfam" id="TIGR01189">
    <property type="entry name" value="ccmA"/>
    <property type="match status" value="1"/>
</dbReference>
<dbReference type="PANTHER" id="PTHR43499">
    <property type="entry name" value="ABC TRANSPORTER I FAMILY MEMBER 1"/>
    <property type="match status" value="1"/>
</dbReference>
<dbReference type="PANTHER" id="PTHR43499:SF1">
    <property type="entry name" value="ABC TRANSPORTER I FAMILY MEMBER 1"/>
    <property type="match status" value="1"/>
</dbReference>
<dbReference type="Pfam" id="PF00005">
    <property type="entry name" value="ABC_tran"/>
    <property type="match status" value="1"/>
</dbReference>
<dbReference type="SMART" id="SM00382">
    <property type="entry name" value="AAA"/>
    <property type="match status" value="1"/>
</dbReference>
<dbReference type="SUPFAM" id="SSF52540">
    <property type="entry name" value="P-loop containing nucleoside triphosphate hydrolases"/>
    <property type="match status" value="1"/>
</dbReference>
<dbReference type="PROSITE" id="PS00211">
    <property type="entry name" value="ABC_TRANSPORTER_1"/>
    <property type="match status" value="1"/>
</dbReference>
<dbReference type="PROSITE" id="PS50893">
    <property type="entry name" value="ABC_TRANSPORTER_2"/>
    <property type="match status" value="1"/>
</dbReference>
<dbReference type="PROSITE" id="PS51243">
    <property type="entry name" value="CCMA"/>
    <property type="match status" value="1"/>
</dbReference>
<name>CCMA_AGRFC</name>
<proteinExistence type="inferred from homology"/>
<protein>
    <recommendedName>
        <fullName evidence="1">Cytochrome c biogenesis ATP-binding export protein CcmA</fullName>
        <ecNumber evidence="1">7.6.2.5</ecNumber>
    </recommendedName>
    <alternativeName>
        <fullName evidence="1">Heme exporter protein A</fullName>
    </alternativeName>
</protein>
<keyword id="KW-0067">ATP-binding</keyword>
<keyword id="KW-0997">Cell inner membrane</keyword>
<keyword id="KW-1003">Cell membrane</keyword>
<keyword id="KW-0201">Cytochrome c-type biogenesis</keyword>
<keyword id="KW-0472">Membrane</keyword>
<keyword id="KW-0547">Nucleotide-binding</keyword>
<keyword id="KW-1185">Reference proteome</keyword>
<keyword id="KW-1278">Translocase</keyword>
<keyword id="KW-0813">Transport</keyword>
<comment type="function">
    <text evidence="1">Part of the ABC transporter complex CcmAB involved in the biogenesis of c-type cytochromes; once thought to export heme, this seems not to be the case, but its exact role is uncertain. Responsible for energy coupling to the transport system.</text>
</comment>
<comment type="catalytic activity">
    <reaction evidence="1">
        <text>heme b(in) + ATP + H2O = heme b(out) + ADP + phosphate + H(+)</text>
        <dbReference type="Rhea" id="RHEA:19261"/>
        <dbReference type="ChEBI" id="CHEBI:15377"/>
        <dbReference type="ChEBI" id="CHEBI:15378"/>
        <dbReference type="ChEBI" id="CHEBI:30616"/>
        <dbReference type="ChEBI" id="CHEBI:43474"/>
        <dbReference type="ChEBI" id="CHEBI:60344"/>
        <dbReference type="ChEBI" id="CHEBI:456216"/>
        <dbReference type="EC" id="7.6.2.5"/>
    </reaction>
</comment>
<comment type="subunit">
    <text evidence="1">The complex is composed of two ATP-binding proteins (CcmA) and two transmembrane proteins (CcmB).</text>
</comment>
<comment type="subcellular location">
    <subcellularLocation>
        <location evidence="1">Cell inner membrane</location>
        <topology evidence="1">Peripheral membrane protein</topology>
    </subcellularLocation>
</comment>
<comment type="similarity">
    <text evidence="1">Belongs to the ABC transporter superfamily. CcmA exporter (TC 3.A.1.107) family.</text>
</comment>